<name>METK_LACAC</name>
<feature type="chain" id="PRO_0000241002" description="S-adenosylmethionine synthase">
    <location>
        <begin position="1"/>
        <end position="399"/>
    </location>
</feature>
<feature type="region of interest" description="Flexible loop" evidence="1">
    <location>
        <begin position="99"/>
        <end position="109"/>
    </location>
</feature>
<feature type="binding site" description="in other chain" evidence="1">
    <location>
        <position position="15"/>
    </location>
    <ligand>
        <name>ATP</name>
        <dbReference type="ChEBI" id="CHEBI:30616"/>
        <note>ligand shared between two neighboring subunits</note>
    </ligand>
</feature>
<feature type="binding site" evidence="1">
    <location>
        <position position="17"/>
    </location>
    <ligand>
        <name>Mg(2+)</name>
        <dbReference type="ChEBI" id="CHEBI:18420"/>
    </ligand>
</feature>
<feature type="binding site" evidence="1">
    <location>
        <position position="43"/>
    </location>
    <ligand>
        <name>K(+)</name>
        <dbReference type="ChEBI" id="CHEBI:29103"/>
    </ligand>
</feature>
<feature type="binding site" description="in other chain" evidence="1">
    <location>
        <position position="56"/>
    </location>
    <ligand>
        <name>L-methionine</name>
        <dbReference type="ChEBI" id="CHEBI:57844"/>
        <note>ligand shared between two neighboring subunits</note>
    </ligand>
</feature>
<feature type="binding site" description="in other chain" evidence="1">
    <location>
        <position position="99"/>
    </location>
    <ligand>
        <name>L-methionine</name>
        <dbReference type="ChEBI" id="CHEBI:57844"/>
        <note>ligand shared between two neighboring subunits</note>
    </ligand>
</feature>
<feature type="binding site" description="in other chain" evidence="1">
    <location>
        <begin position="175"/>
        <end position="177"/>
    </location>
    <ligand>
        <name>ATP</name>
        <dbReference type="ChEBI" id="CHEBI:30616"/>
        <note>ligand shared between two neighboring subunits</note>
    </ligand>
</feature>
<feature type="binding site" description="in other chain" evidence="1">
    <location>
        <begin position="242"/>
        <end position="243"/>
    </location>
    <ligand>
        <name>ATP</name>
        <dbReference type="ChEBI" id="CHEBI:30616"/>
        <note>ligand shared between two neighboring subunits</note>
    </ligand>
</feature>
<feature type="binding site" evidence="1">
    <location>
        <position position="251"/>
    </location>
    <ligand>
        <name>ATP</name>
        <dbReference type="ChEBI" id="CHEBI:30616"/>
        <note>ligand shared between two neighboring subunits</note>
    </ligand>
</feature>
<feature type="binding site" evidence="1">
    <location>
        <position position="251"/>
    </location>
    <ligand>
        <name>L-methionine</name>
        <dbReference type="ChEBI" id="CHEBI:57844"/>
        <note>ligand shared between two neighboring subunits</note>
    </ligand>
</feature>
<feature type="binding site" description="in other chain" evidence="1">
    <location>
        <begin position="257"/>
        <end position="258"/>
    </location>
    <ligand>
        <name>ATP</name>
        <dbReference type="ChEBI" id="CHEBI:30616"/>
        <note>ligand shared between two neighboring subunits</note>
    </ligand>
</feature>
<feature type="binding site" evidence="1">
    <location>
        <position position="274"/>
    </location>
    <ligand>
        <name>ATP</name>
        <dbReference type="ChEBI" id="CHEBI:30616"/>
        <note>ligand shared between two neighboring subunits</note>
    </ligand>
</feature>
<feature type="binding site" evidence="1">
    <location>
        <position position="278"/>
    </location>
    <ligand>
        <name>ATP</name>
        <dbReference type="ChEBI" id="CHEBI:30616"/>
        <note>ligand shared between two neighboring subunits</note>
    </ligand>
</feature>
<feature type="binding site" description="in other chain" evidence="1">
    <location>
        <position position="282"/>
    </location>
    <ligand>
        <name>L-methionine</name>
        <dbReference type="ChEBI" id="CHEBI:57844"/>
        <note>ligand shared between two neighboring subunits</note>
    </ligand>
</feature>
<protein>
    <recommendedName>
        <fullName evidence="1">S-adenosylmethionine synthase</fullName>
        <shortName evidence="1">AdoMet synthase</shortName>
        <ecNumber evidence="1">2.5.1.6</ecNumber>
    </recommendedName>
    <alternativeName>
        <fullName evidence="1">MAT</fullName>
    </alternativeName>
    <alternativeName>
        <fullName evidence="1">Methionine adenosyltransferase</fullName>
    </alternativeName>
</protein>
<gene>
    <name evidence="1" type="primary">metK</name>
    <name type="ordered locus">LBA1622</name>
</gene>
<evidence type="ECO:0000255" key="1">
    <source>
        <dbReference type="HAMAP-Rule" id="MF_00086"/>
    </source>
</evidence>
<reference key="1">
    <citation type="journal article" date="2005" name="Proc. Natl. Acad. Sci. U.S.A.">
        <title>Complete genome sequence of the probiotic lactic acid bacterium Lactobacillus acidophilus NCFM.</title>
        <authorList>
            <person name="Altermann E."/>
            <person name="Russell W.M."/>
            <person name="Azcarate-Peril M.A."/>
            <person name="Barrangou R."/>
            <person name="Buck B.L."/>
            <person name="McAuliffe O."/>
            <person name="Souther N."/>
            <person name="Dobson A."/>
            <person name="Duong T."/>
            <person name="Callanan M."/>
            <person name="Lick S."/>
            <person name="Hamrick A."/>
            <person name="Cano R."/>
            <person name="Klaenhammer T.R."/>
        </authorList>
    </citation>
    <scope>NUCLEOTIDE SEQUENCE [LARGE SCALE GENOMIC DNA]</scope>
    <source>
        <strain>ATCC 700396 / NCK56 / N2 / NCFM</strain>
    </source>
</reference>
<accession>Q5FIN8</accession>
<sequence length="399" mass="43847">MEKRLFTSESVSEGHPDKVADQISDAILDAMLKKDPNSHVACETIVTTGMVFVFGEISTSAYVDIQDVVRKTILKIGYDRPELGFDGNNCAVMVDIDEQSPDIADGVDHSLETRENKSDNDELDQIGAGDQGLMFGFAIKETPELMPLPISLSHRLMRRVASLRKDHTLEWLRPDAKAQVTVEYDENGKPLCVDTVVISTQTDAEVSNEEICRAMIDLVIKEVIPAKYLDENTKFLINPSGRFVIGGPKGDSGLTGRKIIVDTYGGYARHGGGAFSGKDPTKVDRSASYAARYVAKNIVAAGLAYRCEVQLAYAIGVAHPVSIMIDTAGTGTVDDELLTEAVRNVFDLRPAGIIKMLDLRRPIYEQTAAYGHFGRTDVDLPWEKTDKTQALLDYIKNNQ</sequence>
<proteinExistence type="inferred from homology"/>
<dbReference type="EC" id="2.5.1.6" evidence="1"/>
<dbReference type="EMBL" id="CP000033">
    <property type="protein sequence ID" value="AAV43436.1"/>
    <property type="molecule type" value="Genomic_DNA"/>
</dbReference>
<dbReference type="RefSeq" id="WP_003548514.1">
    <property type="nucleotide sequence ID" value="NC_006814.3"/>
</dbReference>
<dbReference type="RefSeq" id="YP_194467.1">
    <property type="nucleotide sequence ID" value="NC_006814.3"/>
</dbReference>
<dbReference type="SMR" id="Q5FIN8"/>
<dbReference type="STRING" id="272621.LBA1622"/>
<dbReference type="GeneID" id="93289315"/>
<dbReference type="KEGG" id="lac:LBA1622"/>
<dbReference type="PATRIC" id="fig|272621.13.peg.1543"/>
<dbReference type="eggNOG" id="COG0192">
    <property type="taxonomic scope" value="Bacteria"/>
</dbReference>
<dbReference type="HOGENOM" id="CLU_041802_1_1_9"/>
<dbReference type="OrthoDB" id="9801686at2"/>
<dbReference type="BioCyc" id="LACI272621:G1G49-1584-MONOMER"/>
<dbReference type="UniPathway" id="UPA00315">
    <property type="reaction ID" value="UER00080"/>
</dbReference>
<dbReference type="Proteomes" id="UP000006381">
    <property type="component" value="Chromosome"/>
</dbReference>
<dbReference type="GO" id="GO:0005737">
    <property type="term" value="C:cytoplasm"/>
    <property type="evidence" value="ECO:0007669"/>
    <property type="project" value="UniProtKB-SubCell"/>
</dbReference>
<dbReference type="GO" id="GO:0005524">
    <property type="term" value="F:ATP binding"/>
    <property type="evidence" value="ECO:0007669"/>
    <property type="project" value="UniProtKB-UniRule"/>
</dbReference>
<dbReference type="GO" id="GO:0000287">
    <property type="term" value="F:magnesium ion binding"/>
    <property type="evidence" value="ECO:0007669"/>
    <property type="project" value="UniProtKB-UniRule"/>
</dbReference>
<dbReference type="GO" id="GO:0004478">
    <property type="term" value="F:methionine adenosyltransferase activity"/>
    <property type="evidence" value="ECO:0007669"/>
    <property type="project" value="UniProtKB-UniRule"/>
</dbReference>
<dbReference type="GO" id="GO:0006730">
    <property type="term" value="P:one-carbon metabolic process"/>
    <property type="evidence" value="ECO:0007669"/>
    <property type="project" value="UniProtKB-KW"/>
</dbReference>
<dbReference type="GO" id="GO:0006556">
    <property type="term" value="P:S-adenosylmethionine biosynthetic process"/>
    <property type="evidence" value="ECO:0007669"/>
    <property type="project" value="UniProtKB-UniRule"/>
</dbReference>
<dbReference type="CDD" id="cd18079">
    <property type="entry name" value="S-AdoMet_synt"/>
    <property type="match status" value="1"/>
</dbReference>
<dbReference type="FunFam" id="3.30.300.10:FF:000003">
    <property type="entry name" value="S-adenosylmethionine synthase"/>
    <property type="match status" value="1"/>
</dbReference>
<dbReference type="Gene3D" id="3.30.300.10">
    <property type="match status" value="3"/>
</dbReference>
<dbReference type="HAMAP" id="MF_00086">
    <property type="entry name" value="S_AdoMet_synth1"/>
    <property type="match status" value="1"/>
</dbReference>
<dbReference type="InterPro" id="IPR022631">
    <property type="entry name" value="ADOMET_SYNTHASE_CS"/>
</dbReference>
<dbReference type="InterPro" id="IPR022630">
    <property type="entry name" value="S-AdoMet_synt_C"/>
</dbReference>
<dbReference type="InterPro" id="IPR022629">
    <property type="entry name" value="S-AdoMet_synt_central"/>
</dbReference>
<dbReference type="InterPro" id="IPR022628">
    <property type="entry name" value="S-AdoMet_synt_N"/>
</dbReference>
<dbReference type="InterPro" id="IPR002133">
    <property type="entry name" value="S-AdoMet_synthetase"/>
</dbReference>
<dbReference type="InterPro" id="IPR022636">
    <property type="entry name" value="S-AdoMet_synthetase_sfam"/>
</dbReference>
<dbReference type="NCBIfam" id="TIGR01034">
    <property type="entry name" value="metK"/>
    <property type="match status" value="1"/>
</dbReference>
<dbReference type="PANTHER" id="PTHR11964">
    <property type="entry name" value="S-ADENOSYLMETHIONINE SYNTHETASE"/>
    <property type="match status" value="1"/>
</dbReference>
<dbReference type="Pfam" id="PF02773">
    <property type="entry name" value="S-AdoMet_synt_C"/>
    <property type="match status" value="1"/>
</dbReference>
<dbReference type="Pfam" id="PF02772">
    <property type="entry name" value="S-AdoMet_synt_M"/>
    <property type="match status" value="1"/>
</dbReference>
<dbReference type="Pfam" id="PF00438">
    <property type="entry name" value="S-AdoMet_synt_N"/>
    <property type="match status" value="1"/>
</dbReference>
<dbReference type="PIRSF" id="PIRSF000497">
    <property type="entry name" value="MAT"/>
    <property type="match status" value="1"/>
</dbReference>
<dbReference type="SUPFAM" id="SSF55973">
    <property type="entry name" value="S-adenosylmethionine synthetase"/>
    <property type="match status" value="3"/>
</dbReference>
<dbReference type="PROSITE" id="PS00376">
    <property type="entry name" value="ADOMET_SYNTHASE_1"/>
    <property type="match status" value="1"/>
</dbReference>
<dbReference type="PROSITE" id="PS00377">
    <property type="entry name" value="ADOMET_SYNTHASE_2"/>
    <property type="match status" value="1"/>
</dbReference>
<keyword id="KW-0067">ATP-binding</keyword>
<keyword id="KW-0963">Cytoplasm</keyword>
<keyword id="KW-0460">Magnesium</keyword>
<keyword id="KW-0479">Metal-binding</keyword>
<keyword id="KW-0547">Nucleotide-binding</keyword>
<keyword id="KW-0554">One-carbon metabolism</keyword>
<keyword id="KW-0630">Potassium</keyword>
<keyword id="KW-1185">Reference proteome</keyword>
<keyword id="KW-0808">Transferase</keyword>
<organism>
    <name type="scientific">Lactobacillus acidophilus (strain ATCC 700396 / NCK56 / N2 / NCFM)</name>
    <dbReference type="NCBI Taxonomy" id="272621"/>
    <lineage>
        <taxon>Bacteria</taxon>
        <taxon>Bacillati</taxon>
        <taxon>Bacillota</taxon>
        <taxon>Bacilli</taxon>
        <taxon>Lactobacillales</taxon>
        <taxon>Lactobacillaceae</taxon>
        <taxon>Lactobacillus</taxon>
    </lineage>
</organism>
<comment type="function">
    <text evidence="1">Catalyzes the formation of S-adenosylmethionine (AdoMet) from methionine and ATP. The overall synthetic reaction is composed of two sequential steps, AdoMet formation and the subsequent tripolyphosphate hydrolysis which occurs prior to release of AdoMet from the enzyme.</text>
</comment>
<comment type="catalytic activity">
    <reaction evidence="1">
        <text>L-methionine + ATP + H2O = S-adenosyl-L-methionine + phosphate + diphosphate</text>
        <dbReference type="Rhea" id="RHEA:21080"/>
        <dbReference type="ChEBI" id="CHEBI:15377"/>
        <dbReference type="ChEBI" id="CHEBI:30616"/>
        <dbReference type="ChEBI" id="CHEBI:33019"/>
        <dbReference type="ChEBI" id="CHEBI:43474"/>
        <dbReference type="ChEBI" id="CHEBI:57844"/>
        <dbReference type="ChEBI" id="CHEBI:59789"/>
        <dbReference type="EC" id="2.5.1.6"/>
    </reaction>
</comment>
<comment type="cofactor">
    <cofactor evidence="1">
        <name>Mg(2+)</name>
        <dbReference type="ChEBI" id="CHEBI:18420"/>
    </cofactor>
    <text evidence="1">Binds 2 divalent ions per subunit.</text>
</comment>
<comment type="cofactor">
    <cofactor evidence="1">
        <name>K(+)</name>
        <dbReference type="ChEBI" id="CHEBI:29103"/>
    </cofactor>
    <text evidence="1">Binds 1 potassium ion per subunit.</text>
</comment>
<comment type="pathway">
    <text evidence="1">Amino-acid biosynthesis; S-adenosyl-L-methionine biosynthesis; S-adenosyl-L-methionine from L-methionine: step 1/1.</text>
</comment>
<comment type="subunit">
    <text evidence="1">Homotetramer; dimer of dimers.</text>
</comment>
<comment type="subcellular location">
    <subcellularLocation>
        <location evidence="1">Cytoplasm</location>
    </subcellularLocation>
</comment>
<comment type="similarity">
    <text evidence="1">Belongs to the AdoMet synthase family.</text>
</comment>